<evidence type="ECO:0000250" key="1">
    <source>
        <dbReference type="UniProtKB" id="P08686"/>
    </source>
</evidence>
<evidence type="ECO:0000269" key="2">
    <source>
    </source>
</evidence>
<evidence type="ECO:0000269" key="3">
    <source>
    </source>
</evidence>
<evidence type="ECO:0000303" key="4">
    <source>
    </source>
</evidence>
<evidence type="ECO:0000305" key="5"/>
<evidence type="ECO:0000305" key="6">
    <source>
    </source>
</evidence>
<evidence type="ECO:0000305" key="7">
    <source>
    </source>
</evidence>
<evidence type="ECO:0007744" key="8">
    <source>
        <dbReference type="PDB" id="3QZ1"/>
    </source>
</evidence>
<evidence type="ECO:0007829" key="9">
    <source>
        <dbReference type="PDB" id="3QZ1"/>
    </source>
</evidence>
<feature type="chain" id="PRO_0000051974" description="Steroid 21-hydroxylase">
    <location>
        <begin position="1"/>
        <end position="496"/>
    </location>
</feature>
<feature type="binding site" evidence="2 8">
    <location>
        <position position="109"/>
    </location>
    <ligand>
        <name>heme b</name>
        <dbReference type="ChEBI" id="CHEBI:60344"/>
    </ligand>
</feature>
<feature type="binding site" evidence="2 8">
    <location>
        <position position="232"/>
    </location>
    <ligand>
        <name>17alpha-hydroxyprogesterone</name>
        <dbReference type="ChEBI" id="CHEBI:17252"/>
    </ligand>
</feature>
<feature type="binding site" evidence="1">
    <location>
        <position position="232"/>
    </location>
    <ligand>
        <name>progesterone</name>
        <dbReference type="ChEBI" id="CHEBI:17026"/>
    </ligand>
</feature>
<feature type="binding site" evidence="2 8">
    <location>
        <position position="364"/>
    </location>
    <ligand>
        <name>heme b</name>
        <dbReference type="ChEBI" id="CHEBI:60344"/>
    </ligand>
</feature>
<feature type="binding site" evidence="2 8">
    <location>
        <position position="425"/>
    </location>
    <ligand>
        <name>heme b</name>
        <dbReference type="ChEBI" id="CHEBI:60344"/>
    </ligand>
</feature>
<feature type="binding site" description="axial binding residue" evidence="2 8">
    <location>
        <position position="427"/>
    </location>
    <ligand>
        <name>heme b</name>
        <dbReference type="ChEBI" id="CHEBI:60344"/>
    </ligand>
    <ligandPart>
        <name>Fe</name>
        <dbReference type="ChEBI" id="CHEBI:18248"/>
    </ligandPart>
</feature>
<feature type="sequence conflict" description="In Ref. 4; AA sequence." evidence="5" ref="4">
    <original>L</original>
    <variation>K</variation>
    <location>
        <position position="13"/>
    </location>
</feature>
<feature type="sequence conflict" description="In Ref. 2; AAA30487." evidence="5" ref="2">
    <original>A</original>
    <variation>S</variation>
    <location>
        <position position="14"/>
    </location>
</feature>
<feature type="sequence conflict" description="In Ref. 2; AAA30487." evidence="5" ref="2">
    <original>H</original>
    <variation>Y</variation>
    <location>
        <position position="401"/>
    </location>
</feature>
<feature type="sequence conflict" description="In Ref. 3; AAA30486." evidence="5" ref="3">
    <original>S</original>
    <variation>C</variation>
    <location>
        <position position="431"/>
    </location>
</feature>
<feature type="strand" evidence="9">
    <location>
        <begin position="41"/>
        <end position="43"/>
    </location>
</feature>
<feature type="helix" evidence="9">
    <location>
        <begin position="45"/>
        <end position="51"/>
    </location>
</feature>
<feature type="helix" evidence="9">
    <location>
        <begin position="52"/>
        <end position="54"/>
    </location>
</feature>
<feature type="strand" evidence="9">
    <location>
        <begin position="58"/>
        <end position="62"/>
    </location>
</feature>
<feature type="strand" evidence="9">
    <location>
        <begin position="64"/>
        <end position="67"/>
    </location>
</feature>
<feature type="strand" evidence="9">
    <location>
        <begin position="69"/>
        <end position="72"/>
    </location>
</feature>
<feature type="helix" evidence="9">
    <location>
        <begin position="77"/>
        <end position="80"/>
    </location>
</feature>
<feature type="turn" evidence="9">
    <location>
        <begin position="81"/>
        <end position="84"/>
    </location>
</feature>
<feature type="turn" evidence="9">
    <location>
        <begin position="96"/>
        <end position="100"/>
    </location>
</feature>
<feature type="strand" evidence="9">
    <location>
        <begin position="108"/>
        <end position="111"/>
    </location>
</feature>
<feature type="helix" evidence="9">
    <location>
        <begin position="115"/>
        <end position="129"/>
    </location>
</feature>
<feature type="helix" evidence="9">
    <location>
        <begin position="137"/>
        <end position="152"/>
    </location>
</feature>
<feature type="helix" evidence="9">
    <location>
        <begin position="160"/>
        <end position="165"/>
    </location>
</feature>
<feature type="helix" evidence="9">
    <location>
        <begin position="167"/>
        <end position="172"/>
    </location>
</feature>
<feature type="turn" evidence="9">
    <location>
        <begin position="173"/>
        <end position="176"/>
    </location>
</feature>
<feature type="helix" evidence="9">
    <location>
        <begin position="183"/>
        <end position="194"/>
    </location>
</feature>
<feature type="turn" evidence="9">
    <location>
        <begin position="195"/>
        <end position="200"/>
    </location>
</feature>
<feature type="helix" evidence="9">
    <location>
        <begin position="203"/>
        <end position="210"/>
    </location>
</feature>
<feature type="helix" evidence="9">
    <location>
        <begin position="212"/>
        <end position="214"/>
    </location>
</feature>
<feature type="helix" evidence="9">
    <location>
        <begin position="220"/>
        <end position="245"/>
    </location>
</feature>
<feature type="strand" evidence="9">
    <location>
        <begin position="253"/>
        <end position="255"/>
    </location>
</feature>
<feature type="helix" evidence="9">
    <location>
        <begin position="256"/>
        <end position="259"/>
    </location>
</feature>
<feature type="helix" evidence="9">
    <location>
        <begin position="278"/>
        <end position="308"/>
    </location>
</feature>
<feature type="helix" evidence="9">
    <location>
        <begin position="310"/>
        <end position="324"/>
    </location>
</feature>
<feature type="strand" evidence="9">
    <location>
        <begin position="326"/>
        <end position="331"/>
    </location>
</feature>
<feature type="helix" evidence="9">
    <location>
        <begin position="337"/>
        <end position="339"/>
    </location>
</feature>
<feature type="helix" evidence="9">
    <location>
        <begin position="342"/>
        <end position="354"/>
    </location>
</feature>
<feature type="strand" evidence="9">
    <location>
        <begin position="357"/>
        <end position="360"/>
    </location>
</feature>
<feature type="strand" evidence="9">
    <location>
        <begin position="373"/>
        <end position="377"/>
    </location>
</feature>
<feature type="strand" evidence="9">
    <location>
        <begin position="382"/>
        <end position="385"/>
    </location>
</feature>
<feature type="helix" evidence="9">
    <location>
        <begin position="387"/>
        <end position="390"/>
    </location>
</feature>
<feature type="turn" evidence="9">
    <location>
        <begin position="394"/>
        <end position="396"/>
    </location>
</feature>
<feature type="strand" evidence="9">
    <location>
        <begin position="397"/>
        <end position="399"/>
    </location>
</feature>
<feature type="strand" evidence="9">
    <location>
        <begin position="410"/>
        <end position="412"/>
    </location>
</feature>
<feature type="strand" evidence="9">
    <location>
        <begin position="423"/>
        <end position="426"/>
    </location>
</feature>
<feature type="helix" evidence="9">
    <location>
        <begin position="430"/>
        <end position="447"/>
    </location>
</feature>
<comment type="function">
    <text evidence="2 3">A cytochrome P450 monooxygenase that plays a major role in adrenal steroidogenesis. Catalyzes the hydroxylation at C-21 of progesterone and 17alpha-hydroxyprogesterone to respectively form 11-deoxycorticosterone and 11-deoxycortisol, intermediate metabolites in the biosynthetic pathway of mineralocorticoids and glucocorticoids (PubMed:22262854, PubMed:25855791). Mechanistically, uses molecular oxygen inserting one oxygen atom into a substrate, and reducing the second into a water molecule, with two electrons provided by NADPH via cytochrome P450 reductase (CPR; NADPH-ferrihemoprotein reductase) (PubMed:22262854, PubMed:25855791).</text>
</comment>
<comment type="catalytic activity">
    <reaction evidence="2 3">
        <text>progesterone + reduced [NADPH--hemoprotein reductase] + O2 = 21-hydroxyprogesterone + oxidized [NADPH--hemoprotein reductase] + H2O + H(+)</text>
        <dbReference type="Rhea" id="RHEA:50304"/>
        <dbReference type="Rhea" id="RHEA-COMP:11964"/>
        <dbReference type="Rhea" id="RHEA-COMP:11965"/>
        <dbReference type="ChEBI" id="CHEBI:15377"/>
        <dbReference type="ChEBI" id="CHEBI:15378"/>
        <dbReference type="ChEBI" id="CHEBI:15379"/>
        <dbReference type="ChEBI" id="CHEBI:16973"/>
        <dbReference type="ChEBI" id="CHEBI:17026"/>
        <dbReference type="ChEBI" id="CHEBI:57618"/>
        <dbReference type="ChEBI" id="CHEBI:58210"/>
        <dbReference type="EC" id="1.14.14.16"/>
    </reaction>
    <physiologicalReaction direction="left-to-right" evidence="6 7">
        <dbReference type="Rhea" id="RHEA:50305"/>
    </physiologicalReaction>
</comment>
<comment type="catalytic activity">
    <reaction evidence="2 3">
        <text>17alpha-hydroxyprogesterone + reduced [NADPH--hemoprotein reductase] + O2 = 11-deoxycortisol + oxidized [NADPH--hemoprotein reductase] + H2O + H(+)</text>
        <dbReference type="Rhea" id="RHEA:50308"/>
        <dbReference type="Rhea" id="RHEA-COMP:11964"/>
        <dbReference type="Rhea" id="RHEA-COMP:11965"/>
        <dbReference type="ChEBI" id="CHEBI:15377"/>
        <dbReference type="ChEBI" id="CHEBI:15378"/>
        <dbReference type="ChEBI" id="CHEBI:15379"/>
        <dbReference type="ChEBI" id="CHEBI:17252"/>
        <dbReference type="ChEBI" id="CHEBI:28324"/>
        <dbReference type="ChEBI" id="CHEBI:57618"/>
        <dbReference type="ChEBI" id="CHEBI:58210"/>
        <dbReference type="EC" id="1.14.14.16"/>
    </reaction>
    <physiologicalReaction direction="left-to-right" evidence="6 7">
        <dbReference type="Rhea" id="RHEA:50309"/>
    </physiologicalReaction>
</comment>
<comment type="cofactor">
    <cofactor evidence="2">
        <name>heme b</name>
        <dbReference type="ChEBI" id="CHEBI:60344"/>
    </cofactor>
</comment>
<comment type="biophysicochemical properties">
    <kinetics>
        <KM evidence="3">0.5 uM for progesterone</KM>
        <KM evidence="3">0.44 uM for 17alpha-hydroxyprogesterone</KM>
    </kinetics>
</comment>
<comment type="subcellular location">
    <subcellularLocation>
        <location evidence="1">Endoplasmic reticulum membrane</location>
        <topology evidence="1">Peripheral membrane protein</topology>
    </subcellularLocation>
    <subcellularLocation>
        <location evidence="1">Microsome membrane</location>
        <topology evidence="1">Peripheral membrane protein</topology>
    </subcellularLocation>
</comment>
<comment type="domain">
    <text evidence="1">The leucine-rich hydrophobic amino acid N-terminal region probably helps to anchor the protein to the microsomal membrane.</text>
</comment>
<comment type="similarity">
    <text evidence="5">Belongs to the cytochrome P450 family.</text>
</comment>
<gene>
    <name type="primary">CYP21</name>
    <name type="synonym">CYP21A1</name>
    <name type="synonym">CYP21A2</name>
</gene>
<sequence length="496" mass="56077">MVLAGLLLLLTLLAGAHLLWGRWKLRNLHLPPLVPGFLHLLQPNLPIHLLSLTQKLGPVYRLRLGLQEVVVLNSKRTIEEAMIRKWVDFAGRPQIPSYKLVSQRCQDISLGDYSLLWKAHKKLTRSALLLGTRSSMEPWVDQLTQEFCERMRVQAGAPVTIQKEFSLLTCSIICYLTFGNKEDTLVHAFHDCVQDLMKTWDHWSIQILDMVPFLRFFPNPGLWRLKQAIENRDHMVEKQLTRHKESMVAGQWRDMTDYMLQGVGRQRVEEGPGQLLEGHVHMSVVDLFIGGTETTASTLSWAVAFLLHHPEIQRRLQEELDRELGPGASCSRVTYKDRARLPLLNATIAEVLRLRPVVPLALPHRTTRPSSIFGYDIPEGMVVIPNLQGAHLDETVWEQPHEFRPDRFLEPGANPSALAFGCGARVCLGESLARLELFVVLLRLLQAFTLLPPPVGALPSLQPDPYCGVNLKVQPFQVRLQPRGVEAGAWESASAQ</sequence>
<reference key="1">
    <citation type="journal article" date="1986" name="Proc. Natl. Acad. Sci. U.S.A.">
        <title>Structure of a bovine gene for P-450c21 (steroid 21-hydroxylase) defines a novel cytochrome P-450 gene family.</title>
        <authorList>
            <person name="Chung B."/>
            <person name="Matteson K.J."/>
            <person name="Miller W.L."/>
        </authorList>
    </citation>
    <scope>NUCLEOTIDE SEQUENCE [GENOMIC DNA]</scope>
</reference>
<reference key="2">
    <citation type="journal article" date="1986" name="J. Biol. Chem.">
        <title>Structural analysis of cloned cDNA for mRNA of microsomal cytochrome P-450(C21) which catalyzes steroid 21-hydroxylation in bovine adrenal cortex.</title>
        <authorList>
            <person name="Yoshioka H."/>
            <person name="Morohashi K."/>
            <person name="Sogawa K."/>
            <person name="Yamane M."/>
            <person name="Kominami S."/>
            <person name="Takemori S."/>
            <person name="Okada Y."/>
            <person name="Omura T."/>
            <person name="Fujii-Kuriyama Y."/>
        </authorList>
    </citation>
    <scope>NUCLEOTIDE SEQUENCE [MRNA]</scope>
</reference>
<reference key="3">
    <citation type="journal article" date="1986" name="Biochemistry">
        <title>Bovine steroid 21-hydroxylase: regulation of biosynthesis.</title>
        <authorList>
            <person name="John M.E."/>
            <person name="Okamura T."/>
            <person name="Dee A."/>
            <person name="Adler B."/>
            <person name="John M.C."/>
            <person name="White P.C."/>
            <person name="Simpson E.R."/>
            <person name="Waterman M.R."/>
        </authorList>
    </citation>
    <scope>NUCLEOTIDE SEQUENCE [MRNA] OF 121-496</scope>
</reference>
<reference key="4">
    <citation type="journal article" date="1983" name="J. Biochem.">
        <title>Partial amino acid sequences of two mitochondrial and two microsomal cytochrome P-450's from adrenal cortex.</title>
        <authorList>
            <person name="Ogishima T."/>
            <person name="Okada Y."/>
            <person name="Kominami S."/>
            <person name="Takemori S."/>
            <person name="Omura T."/>
        </authorList>
    </citation>
    <scope>PROTEIN SEQUENCE OF 1-15</scope>
</reference>
<reference key="5">
    <citation type="journal article" date="2015" name="J. Biol. Chem.">
        <title>Human Cytochrome P450 21A2, the major steroid 21-hydroxylase: structure of the enzyme-progesterone substrate complex and rate-limiting c-h bond cleavage.</title>
        <authorList>
            <person name="Pallan P.S."/>
            <person name="Wang C."/>
            <person name="Lei L."/>
            <person name="Yoshimoto F.K."/>
            <person name="Auchus R.J."/>
            <person name="Waterman M.R."/>
            <person name="Guengerich F.P."/>
            <person name="Egli M."/>
        </authorList>
    </citation>
    <scope>FUNCTION</scope>
    <scope>CATALYTIC ACTIVITY</scope>
    <scope>BIOPHYSICOCHEMICAL PROPERTIES</scope>
</reference>
<reference evidence="8" key="6">
    <citation type="journal article" date="2012" name="J. Biol. Chem.">
        <title>Three-dimensional structure of steroid 21-hydroxylase (cytochrome P450 21A2) with two substrates reveals locations of disease-associated variants.</title>
        <authorList>
            <person name="Zhao B."/>
            <person name="Lei L."/>
            <person name="Kagawa N."/>
            <person name="Sundaramoorthy M."/>
            <person name="Banerjee S."/>
            <person name="Nagy L.D."/>
            <person name="Guengerich F.P."/>
            <person name="Waterman M.R."/>
        </authorList>
    </citation>
    <scope>X-RAY CRYSTALLOGRAPHY (3.0 ANGSTROMS) IN COMPLEX WITH HEME AND 17-HYDROXYPROGESTERONE</scope>
    <scope>FUNCTION</scope>
    <scope>COFACTOR</scope>
    <scope>CATALYTIC ACTIVITY</scope>
</reference>
<name>CP21A_BOVIN</name>
<dbReference type="EC" id="1.14.14.16" evidence="2 3"/>
<dbReference type="EMBL" id="M11267">
    <property type="protein sequence ID" value="AAA83247.1"/>
    <property type="molecule type" value="Genomic_DNA"/>
</dbReference>
<dbReference type="EMBL" id="M12918">
    <property type="protein sequence ID" value="AAA30487.1"/>
    <property type="molecule type" value="mRNA"/>
</dbReference>
<dbReference type="EMBL" id="K01333">
    <property type="protein sequence ID" value="AAA30486.1"/>
    <property type="molecule type" value="mRNA"/>
</dbReference>
<dbReference type="PIR" id="A27555">
    <property type="entry name" value="O4BOC2"/>
</dbReference>
<dbReference type="RefSeq" id="NP_001013614.1">
    <property type="nucleotide sequence ID" value="NM_001013596.1"/>
</dbReference>
<dbReference type="RefSeq" id="NP_777064.1">
    <property type="nucleotide sequence ID" value="NM_174639.1"/>
</dbReference>
<dbReference type="PDB" id="3QZ1">
    <property type="method" value="X-ray"/>
    <property type="resolution" value="3.00 A"/>
    <property type="chains" value="A/B/C/D=1-496"/>
</dbReference>
<dbReference type="PDBsum" id="3QZ1"/>
<dbReference type="SMR" id="P00191"/>
<dbReference type="FunCoup" id="P00191">
    <property type="interactions" value="2"/>
</dbReference>
<dbReference type="STRING" id="9913.ENSBTAP00000054564"/>
<dbReference type="SwissLipids" id="SLP:000001620"/>
<dbReference type="Ensembl" id="ENSBTAT00000063123.2">
    <property type="protein sequence ID" value="ENSBTAP00000054564.2"/>
    <property type="gene ID" value="ENSBTAG00000047039.3"/>
</dbReference>
<dbReference type="GeneID" id="281741"/>
<dbReference type="KEGG" id="bta:281741"/>
<dbReference type="CTD" id="1589"/>
<dbReference type="VEuPathDB" id="HostDB:ENSBTAG00000047039"/>
<dbReference type="VGNC" id="VGNC:110237">
    <property type="gene designation" value="CYP21A2"/>
</dbReference>
<dbReference type="eggNOG" id="KOG0156">
    <property type="taxonomic scope" value="Eukaryota"/>
</dbReference>
<dbReference type="GeneTree" id="ENSGT00940000158338"/>
<dbReference type="InParanoid" id="P00191"/>
<dbReference type="OMA" id="RICVHEM"/>
<dbReference type="OrthoDB" id="2789670at2759"/>
<dbReference type="BRENDA" id="1.14.14.16">
    <property type="organism ID" value="908"/>
</dbReference>
<dbReference type="Reactome" id="R-BTA-193993">
    <property type="pathway name" value="Mineralocorticoid biosynthesis"/>
</dbReference>
<dbReference type="Reactome" id="R-BTA-194002">
    <property type="pathway name" value="Glucocorticoid biosynthesis"/>
</dbReference>
<dbReference type="Reactome" id="R-BTA-211976">
    <property type="pathway name" value="Endogenous sterols"/>
</dbReference>
<dbReference type="SABIO-RK" id="P00191"/>
<dbReference type="EvolutionaryTrace" id="P00191"/>
<dbReference type="Proteomes" id="UP000009136">
    <property type="component" value="Chromosome 23"/>
</dbReference>
<dbReference type="Bgee" id="ENSBTAG00000047039">
    <property type="expression patterns" value="Expressed in ureter and 91 other cell types or tissues"/>
</dbReference>
<dbReference type="GO" id="GO:0005789">
    <property type="term" value="C:endoplasmic reticulum membrane"/>
    <property type="evidence" value="ECO:0007669"/>
    <property type="project" value="UniProtKB-SubCell"/>
</dbReference>
<dbReference type="GO" id="GO:0103069">
    <property type="term" value="F:17-hydroxyprogesterone 21-hydroxylase activity"/>
    <property type="evidence" value="ECO:0000314"/>
    <property type="project" value="UniProtKB"/>
</dbReference>
<dbReference type="GO" id="GO:0020037">
    <property type="term" value="F:heme binding"/>
    <property type="evidence" value="ECO:0000250"/>
    <property type="project" value="UniProtKB"/>
</dbReference>
<dbReference type="GO" id="GO:0005506">
    <property type="term" value="F:iron ion binding"/>
    <property type="evidence" value="ECO:0007669"/>
    <property type="project" value="InterPro"/>
</dbReference>
<dbReference type="GO" id="GO:0106309">
    <property type="term" value="F:progesterone 21-hydroxylase activity"/>
    <property type="evidence" value="ECO:0000314"/>
    <property type="project" value="UniProtKB"/>
</dbReference>
<dbReference type="GO" id="GO:0004509">
    <property type="term" value="F:steroid 21-monooxygenase activity"/>
    <property type="evidence" value="ECO:0000318"/>
    <property type="project" value="GO_Central"/>
</dbReference>
<dbReference type="GO" id="GO:0005496">
    <property type="term" value="F:steroid binding"/>
    <property type="evidence" value="ECO:0007669"/>
    <property type="project" value="UniProtKB-KW"/>
</dbReference>
<dbReference type="GO" id="GO:0008395">
    <property type="term" value="F:steroid hydroxylase activity"/>
    <property type="evidence" value="ECO:0000250"/>
    <property type="project" value="UniProtKB"/>
</dbReference>
<dbReference type="GO" id="GO:0006704">
    <property type="term" value="P:glucocorticoid biosynthetic process"/>
    <property type="evidence" value="ECO:0000318"/>
    <property type="project" value="GO_Central"/>
</dbReference>
<dbReference type="GO" id="GO:0006694">
    <property type="term" value="P:steroid biosynthetic process"/>
    <property type="evidence" value="ECO:0000314"/>
    <property type="project" value="UniProtKB"/>
</dbReference>
<dbReference type="GO" id="GO:0008202">
    <property type="term" value="P:steroid metabolic process"/>
    <property type="evidence" value="ECO:0000250"/>
    <property type="project" value="UniProtKB"/>
</dbReference>
<dbReference type="CDD" id="cd20674">
    <property type="entry name" value="CYP21"/>
    <property type="match status" value="1"/>
</dbReference>
<dbReference type="FunFam" id="1.10.630.10:FF:000049">
    <property type="entry name" value="steroid 21-hydroxylase isoform X1"/>
    <property type="match status" value="1"/>
</dbReference>
<dbReference type="Gene3D" id="1.10.630.10">
    <property type="entry name" value="Cytochrome P450"/>
    <property type="match status" value="1"/>
</dbReference>
<dbReference type="InterPro" id="IPR001128">
    <property type="entry name" value="Cyt_P450"/>
</dbReference>
<dbReference type="InterPro" id="IPR017972">
    <property type="entry name" value="Cyt_P450_CS"/>
</dbReference>
<dbReference type="InterPro" id="IPR002401">
    <property type="entry name" value="Cyt_P450_E_grp-I"/>
</dbReference>
<dbReference type="InterPro" id="IPR036396">
    <property type="entry name" value="Cyt_P450_sf"/>
</dbReference>
<dbReference type="PANTHER" id="PTHR24289">
    <property type="entry name" value="STEROID 17-ALPHA-HYDROXYLASE/17,20 LYASE"/>
    <property type="match status" value="1"/>
</dbReference>
<dbReference type="PANTHER" id="PTHR24289:SF17">
    <property type="entry name" value="STEROID 21-HYDROXYLASE ISOFORM X1"/>
    <property type="match status" value="1"/>
</dbReference>
<dbReference type="Pfam" id="PF00067">
    <property type="entry name" value="p450"/>
    <property type="match status" value="1"/>
</dbReference>
<dbReference type="PRINTS" id="PR00463">
    <property type="entry name" value="EP450I"/>
</dbReference>
<dbReference type="PRINTS" id="PR00385">
    <property type="entry name" value="P450"/>
</dbReference>
<dbReference type="SUPFAM" id="SSF48264">
    <property type="entry name" value="Cytochrome P450"/>
    <property type="match status" value="1"/>
</dbReference>
<dbReference type="PROSITE" id="PS00086">
    <property type="entry name" value="CYTOCHROME_P450"/>
    <property type="match status" value="1"/>
</dbReference>
<accession>P00191</accession>
<proteinExistence type="evidence at protein level"/>
<organism>
    <name type="scientific">Bos taurus</name>
    <name type="common">Bovine</name>
    <dbReference type="NCBI Taxonomy" id="9913"/>
    <lineage>
        <taxon>Eukaryota</taxon>
        <taxon>Metazoa</taxon>
        <taxon>Chordata</taxon>
        <taxon>Craniata</taxon>
        <taxon>Vertebrata</taxon>
        <taxon>Euteleostomi</taxon>
        <taxon>Mammalia</taxon>
        <taxon>Eutheria</taxon>
        <taxon>Laurasiatheria</taxon>
        <taxon>Artiodactyla</taxon>
        <taxon>Ruminantia</taxon>
        <taxon>Pecora</taxon>
        <taxon>Bovidae</taxon>
        <taxon>Bovinae</taxon>
        <taxon>Bos</taxon>
    </lineage>
</organism>
<keyword id="KW-0002">3D-structure</keyword>
<keyword id="KW-0903">Direct protein sequencing</keyword>
<keyword id="KW-0256">Endoplasmic reticulum</keyword>
<keyword id="KW-0349">Heme</keyword>
<keyword id="KW-0408">Iron</keyword>
<keyword id="KW-0443">Lipid metabolism</keyword>
<keyword id="KW-0446">Lipid-binding</keyword>
<keyword id="KW-0472">Membrane</keyword>
<keyword id="KW-0479">Metal-binding</keyword>
<keyword id="KW-0492">Microsome</keyword>
<keyword id="KW-0503">Monooxygenase</keyword>
<keyword id="KW-0560">Oxidoreductase</keyword>
<keyword id="KW-1185">Reference proteome</keyword>
<keyword id="KW-0754">Steroid-binding</keyword>
<keyword id="KW-0755">Steroidogenesis</keyword>
<protein>
    <recommendedName>
        <fullName evidence="4">Steroid 21-hydroxylase</fullName>
        <ecNumber evidence="2 3">1.14.14.16</ecNumber>
    </recommendedName>
    <alternativeName>
        <fullName>21-OHase</fullName>
    </alternativeName>
    <alternativeName>
        <fullName>Cytochrome P-450c21</fullName>
    </alternativeName>
    <alternativeName>
        <fullName>Cytochrome P450 21</fullName>
    </alternativeName>
    <alternativeName>
        <fullName>Cytochrome P450 XXI</fullName>
    </alternativeName>
    <alternativeName>
        <fullName>Cytochrome P450-C21</fullName>
    </alternativeName>
</protein>